<feature type="chain" id="PRO_0000305168" description="Probable phthiotriol/phenolphthiotriol dimycocerosates methyltransferase 2">
    <location>
        <begin position="1"/>
        <end position="258"/>
    </location>
</feature>
<name>PHMT2_MYCUA</name>
<reference key="1">
    <citation type="journal article" date="2007" name="Genome Res.">
        <title>Reductive evolution and niche adaptation inferred from the genome of Mycobacterium ulcerans, the causative agent of Buruli ulcer.</title>
        <authorList>
            <person name="Stinear T.P."/>
            <person name="Seemann T."/>
            <person name="Pidot S."/>
            <person name="Frigui W."/>
            <person name="Reysset G."/>
            <person name="Garnier T."/>
            <person name="Meurice G."/>
            <person name="Simon D."/>
            <person name="Bouchier C."/>
            <person name="Ma L."/>
            <person name="Tichit M."/>
            <person name="Porter J.L."/>
            <person name="Ryan J."/>
            <person name="Johnson P.D.R."/>
            <person name="Davies J.K."/>
            <person name="Jenkin G.A."/>
            <person name="Small P.L.C."/>
            <person name="Jones L.M."/>
            <person name="Tekaia F."/>
            <person name="Laval F."/>
            <person name="Daffe M."/>
            <person name="Parkhill J."/>
            <person name="Cole S.T."/>
        </authorList>
    </citation>
    <scope>NUCLEOTIDE SEQUENCE [LARGE SCALE GENOMIC DNA]</scope>
    <source>
        <strain>Agy99</strain>
    </source>
</reference>
<accession>A0PQ29</accession>
<proteinExistence type="inferred from homology"/>
<comment type="function">
    <text evidence="1">Catalyzes the methylation of the lipid moiety of the intermediate compounds phthiotriol and glycosylated phenolphthiotriol dimycoserosates to form phthiocerol dimycocerosates (DIM A) and glycosylated phenolphthiocerol dimycocerosates (PGL).</text>
</comment>
<comment type="similarity">
    <text evidence="2">Belongs to the methyltransferase superfamily. Phthiotriol/phenolphthiotriol dimycocerosates methyltransferase family.</text>
</comment>
<organism>
    <name type="scientific">Mycobacterium ulcerans (strain Agy99)</name>
    <dbReference type="NCBI Taxonomy" id="362242"/>
    <lineage>
        <taxon>Bacteria</taxon>
        <taxon>Bacillati</taxon>
        <taxon>Actinomycetota</taxon>
        <taxon>Actinomycetes</taxon>
        <taxon>Mycobacteriales</taxon>
        <taxon>Mycobacteriaceae</taxon>
        <taxon>Mycobacterium</taxon>
        <taxon>Mycobacterium ulcerans group</taxon>
    </lineage>
</organism>
<gene>
    <name type="ordered locus">MUL_2009</name>
</gene>
<dbReference type="EC" id="2.1.1.-"/>
<dbReference type="EMBL" id="CP000325">
    <property type="protein sequence ID" value="ABL04448.1"/>
    <property type="molecule type" value="Genomic_DNA"/>
</dbReference>
<dbReference type="SMR" id="A0PQ29"/>
<dbReference type="KEGG" id="mul:MUL_2009"/>
<dbReference type="eggNOG" id="COG2226">
    <property type="taxonomic scope" value="Bacteria"/>
</dbReference>
<dbReference type="HOGENOM" id="CLU_068661_0_0_11"/>
<dbReference type="Proteomes" id="UP000000765">
    <property type="component" value="Chromosome"/>
</dbReference>
<dbReference type="GO" id="GO:0003838">
    <property type="term" value="F:sterol 24-C-methyltransferase activity"/>
    <property type="evidence" value="ECO:0007669"/>
    <property type="project" value="TreeGrafter"/>
</dbReference>
<dbReference type="GO" id="GO:0032259">
    <property type="term" value="P:methylation"/>
    <property type="evidence" value="ECO:0007669"/>
    <property type="project" value="UniProtKB-KW"/>
</dbReference>
<dbReference type="GO" id="GO:0016126">
    <property type="term" value="P:sterol biosynthetic process"/>
    <property type="evidence" value="ECO:0007669"/>
    <property type="project" value="TreeGrafter"/>
</dbReference>
<dbReference type="CDD" id="cd02440">
    <property type="entry name" value="AdoMet_MTases"/>
    <property type="match status" value="1"/>
</dbReference>
<dbReference type="Gene3D" id="3.40.50.150">
    <property type="entry name" value="Vaccinia Virus protein VP39"/>
    <property type="match status" value="1"/>
</dbReference>
<dbReference type="InterPro" id="IPR050447">
    <property type="entry name" value="Erg6_SMT_methyltransf"/>
</dbReference>
<dbReference type="InterPro" id="IPR013216">
    <property type="entry name" value="Methyltransf_11"/>
</dbReference>
<dbReference type="InterPro" id="IPR054877">
    <property type="entry name" value="PthPhpthDimycoMt"/>
</dbReference>
<dbReference type="InterPro" id="IPR029063">
    <property type="entry name" value="SAM-dependent_MTases_sf"/>
</dbReference>
<dbReference type="NCBIfam" id="NF045823">
    <property type="entry name" value="PthPhpthDimycoMt"/>
    <property type="match status" value="1"/>
</dbReference>
<dbReference type="PANTHER" id="PTHR44068:SF1">
    <property type="entry name" value="HYPOTHETICAL LOC100005854"/>
    <property type="match status" value="1"/>
</dbReference>
<dbReference type="PANTHER" id="PTHR44068">
    <property type="entry name" value="ZGC:194242"/>
    <property type="match status" value="1"/>
</dbReference>
<dbReference type="Pfam" id="PF08241">
    <property type="entry name" value="Methyltransf_11"/>
    <property type="match status" value="1"/>
</dbReference>
<dbReference type="SUPFAM" id="SSF53335">
    <property type="entry name" value="S-adenosyl-L-methionine-dependent methyltransferases"/>
    <property type="match status" value="1"/>
</dbReference>
<protein>
    <recommendedName>
        <fullName>Probable phthiotriol/phenolphthiotriol dimycocerosates methyltransferase 2</fullName>
        <ecNumber>2.1.1.-</ecNumber>
    </recommendedName>
</protein>
<sequence length="258" mass="28934">MALSRTHRVVAGVAHTRVYKKIWKYWYPLMTRGLGADELVFINWAYEEDPPMDLPLEATDEPDRCHINLYHRTATQADLSGKRVLEVSCGHGGGASYLTRTLGPASYTALDLNPAGIKFCQQRHHLPGLDFVQGDAEDLPFEDESFDVVLNVEASHCYPRFPVFLEEVKRVLRPGGYFAYADIRPCTEIAEWEAALAAAGLQQISHREINAEVLRGIDINTPKSRERVKRHLPIFLRAAGRNYIGATGTPPIPPDAKR</sequence>
<keyword id="KW-0444">Lipid biosynthesis</keyword>
<keyword id="KW-0443">Lipid metabolism</keyword>
<keyword id="KW-0489">Methyltransferase</keyword>
<keyword id="KW-0808">Transferase</keyword>
<evidence type="ECO:0000250" key="1"/>
<evidence type="ECO:0000305" key="2"/>